<accession>Q28CE7</accession>
<accession>Q08D30</accession>
<evidence type="ECO:0000250" key="1">
    <source>
        <dbReference type="UniProtKB" id="Q8IWU4"/>
    </source>
</evidence>
<evidence type="ECO:0000250" key="2">
    <source>
        <dbReference type="UniProtKB" id="Q8TAD4"/>
    </source>
</evidence>
<evidence type="ECO:0000255" key="3"/>
<evidence type="ECO:0000256" key="4">
    <source>
        <dbReference type="SAM" id="MobiDB-lite"/>
    </source>
</evidence>
<evidence type="ECO:0000305" key="5"/>
<gene>
    <name type="primary">slc30a5</name>
    <name type="synonym">znt5</name>
    <name type="ORF">TTpA003b13.1</name>
</gene>
<organism>
    <name type="scientific">Xenopus tropicalis</name>
    <name type="common">Western clawed frog</name>
    <name type="synonym">Silurana tropicalis</name>
    <dbReference type="NCBI Taxonomy" id="8364"/>
    <lineage>
        <taxon>Eukaryota</taxon>
        <taxon>Metazoa</taxon>
        <taxon>Chordata</taxon>
        <taxon>Craniata</taxon>
        <taxon>Vertebrata</taxon>
        <taxon>Euteleostomi</taxon>
        <taxon>Amphibia</taxon>
        <taxon>Batrachia</taxon>
        <taxon>Anura</taxon>
        <taxon>Pipoidea</taxon>
        <taxon>Pipidae</taxon>
        <taxon>Xenopodinae</taxon>
        <taxon>Xenopus</taxon>
        <taxon>Silurana</taxon>
    </lineage>
</organism>
<dbReference type="EMBL" id="CR926426">
    <property type="protein sequence ID" value="CAJ83125.1"/>
    <property type="molecule type" value="mRNA"/>
</dbReference>
<dbReference type="EMBL" id="BC123967">
    <property type="protein sequence ID" value="AAI23968.1"/>
    <property type="molecule type" value="mRNA"/>
</dbReference>
<dbReference type="RefSeq" id="NP_001015911.1">
    <property type="nucleotide sequence ID" value="NM_001015911.1"/>
</dbReference>
<dbReference type="SMR" id="Q28CE7"/>
<dbReference type="FunCoup" id="Q28CE7">
    <property type="interactions" value="2146"/>
</dbReference>
<dbReference type="STRING" id="8364.ENSXETP00000015262"/>
<dbReference type="PaxDb" id="8364-ENSXETP00000001010"/>
<dbReference type="DNASU" id="548665"/>
<dbReference type="GeneID" id="548665"/>
<dbReference type="KEGG" id="xtr:548665"/>
<dbReference type="AGR" id="Xenbase:XB-GENE-962722"/>
<dbReference type="CTD" id="64924"/>
<dbReference type="Xenbase" id="XB-GENE-962722">
    <property type="gene designation" value="slc30a5"/>
</dbReference>
<dbReference type="eggNOG" id="KOG1484">
    <property type="taxonomic scope" value="Eukaryota"/>
</dbReference>
<dbReference type="InParanoid" id="Q28CE7"/>
<dbReference type="OMA" id="NHLFYHF"/>
<dbReference type="OrthoDB" id="78669at2759"/>
<dbReference type="Reactome" id="R-XTR-264876">
    <property type="pathway name" value="Insulin processing"/>
</dbReference>
<dbReference type="Reactome" id="R-XTR-435368">
    <property type="pathway name" value="Zinc efflux and compartmentalization by the SLC30 family"/>
</dbReference>
<dbReference type="Proteomes" id="UP000008143">
    <property type="component" value="Chromosome 1"/>
</dbReference>
<dbReference type="GO" id="GO:0005789">
    <property type="term" value="C:endoplasmic reticulum membrane"/>
    <property type="evidence" value="ECO:0000250"/>
    <property type="project" value="UniProtKB"/>
</dbReference>
<dbReference type="GO" id="GO:0012507">
    <property type="term" value="C:ER to Golgi transport vesicle membrane"/>
    <property type="evidence" value="ECO:0000250"/>
    <property type="project" value="UniProtKB"/>
</dbReference>
<dbReference type="GO" id="GO:0005794">
    <property type="term" value="C:Golgi apparatus"/>
    <property type="evidence" value="ECO:0000250"/>
    <property type="project" value="UniProtKB"/>
</dbReference>
<dbReference type="GO" id="GO:1990674">
    <property type="term" value="C:Golgi cis cisterna membrane"/>
    <property type="evidence" value="ECO:0000250"/>
    <property type="project" value="UniProtKB"/>
</dbReference>
<dbReference type="GO" id="GO:0000139">
    <property type="term" value="C:Golgi membrane"/>
    <property type="evidence" value="ECO:0000250"/>
    <property type="project" value="UniProtKB"/>
</dbReference>
<dbReference type="GO" id="GO:0030667">
    <property type="term" value="C:secretory granule membrane"/>
    <property type="evidence" value="ECO:0000250"/>
    <property type="project" value="UniProtKB"/>
</dbReference>
<dbReference type="GO" id="GO:0032588">
    <property type="term" value="C:trans-Golgi network membrane"/>
    <property type="evidence" value="ECO:0000250"/>
    <property type="project" value="UniProtKB"/>
</dbReference>
<dbReference type="GO" id="GO:0046872">
    <property type="term" value="F:metal ion binding"/>
    <property type="evidence" value="ECO:0007669"/>
    <property type="project" value="UniProtKB-KW"/>
</dbReference>
<dbReference type="GO" id="GO:0140826">
    <property type="term" value="F:zinc:proton antiporter activity"/>
    <property type="evidence" value="ECO:0000250"/>
    <property type="project" value="UniProtKB"/>
</dbReference>
<dbReference type="GO" id="GO:0006506">
    <property type="term" value="P:GPI anchor biosynthetic process"/>
    <property type="evidence" value="ECO:0000250"/>
    <property type="project" value="UniProtKB"/>
</dbReference>
<dbReference type="GO" id="GO:0006882">
    <property type="term" value="P:intracellular zinc ion homeostasis"/>
    <property type="evidence" value="ECO:0007669"/>
    <property type="project" value="InterPro"/>
</dbReference>
<dbReference type="GO" id="GO:1904257">
    <property type="term" value="P:zinc ion import into Golgi lumen"/>
    <property type="evidence" value="ECO:0000250"/>
    <property type="project" value="UniProtKB"/>
</dbReference>
<dbReference type="GO" id="GO:0062111">
    <property type="term" value="P:zinc ion import into organelle"/>
    <property type="evidence" value="ECO:0000250"/>
    <property type="project" value="UniProtKB"/>
</dbReference>
<dbReference type="Gene3D" id="1.20.1510.10">
    <property type="entry name" value="Cation efflux protein transmembrane domain"/>
    <property type="match status" value="1"/>
</dbReference>
<dbReference type="InterPro" id="IPR002524">
    <property type="entry name" value="Cation_efflux"/>
</dbReference>
<dbReference type="InterPro" id="IPR027469">
    <property type="entry name" value="Cation_efflux_TMD_sf"/>
</dbReference>
<dbReference type="InterPro" id="IPR045316">
    <property type="entry name" value="Msc2-like"/>
</dbReference>
<dbReference type="NCBIfam" id="TIGR01297">
    <property type="entry name" value="CDF"/>
    <property type="match status" value="1"/>
</dbReference>
<dbReference type="PANTHER" id="PTHR45755">
    <property type="match status" value="1"/>
</dbReference>
<dbReference type="PANTHER" id="PTHR45755:SF1">
    <property type="entry name" value="PROTON-COUPLED ZINC ANTIPORTER SLC30A5"/>
    <property type="match status" value="1"/>
</dbReference>
<dbReference type="Pfam" id="PF01545">
    <property type="entry name" value="Cation_efflux"/>
    <property type="match status" value="1"/>
</dbReference>
<dbReference type="SUPFAM" id="SSF161111">
    <property type="entry name" value="Cation efflux protein transmembrane domain-like"/>
    <property type="match status" value="1"/>
</dbReference>
<proteinExistence type="evidence at transcript level"/>
<reference key="1">
    <citation type="submission" date="2006-10" db="EMBL/GenBank/DDBJ databases">
        <authorList>
            <consortium name="Sanger Xenopus tropicalis EST/cDNA project"/>
        </authorList>
    </citation>
    <scope>NUCLEOTIDE SEQUENCE [LARGE SCALE MRNA]</scope>
    <source>
        <tissue>Tadpole</tissue>
    </source>
</reference>
<reference key="2">
    <citation type="submission" date="2006-09" db="EMBL/GenBank/DDBJ databases">
        <authorList>
            <consortium name="NIH - Xenopus Gene Collection (XGC) project"/>
        </authorList>
    </citation>
    <scope>NUCLEOTIDE SEQUENCE [LARGE SCALE MRNA]</scope>
    <source>
        <strain>N6</strain>
        <tissue>Heart</tissue>
    </source>
</reference>
<protein>
    <recommendedName>
        <fullName evidence="5">Proton-coupled zinc antiporter SLC30A5</fullName>
    </recommendedName>
    <alternativeName>
        <fullName>Solute carrier family 30 member 5</fullName>
    </alternativeName>
    <alternativeName>
        <fullName evidence="5">Zinc transporter 5</fullName>
        <shortName>ZnT-5</shortName>
    </alternativeName>
</protein>
<keyword id="KW-0050">Antiport</keyword>
<keyword id="KW-0968">Cytoplasmic vesicle</keyword>
<keyword id="KW-0333">Golgi apparatus</keyword>
<keyword id="KW-0406">Ion transport</keyword>
<keyword id="KW-0472">Membrane</keyword>
<keyword id="KW-0479">Metal-binding</keyword>
<keyword id="KW-1185">Reference proteome</keyword>
<keyword id="KW-0812">Transmembrane</keyword>
<keyword id="KW-1133">Transmembrane helix</keyword>
<keyword id="KW-0813">Transport</keyword>
<keyword id="KW-0862">Zinc</keyword>
<keyword id="KW-0864">Zinc transport</keyword>
<name>ZNT5_XENTR</name>
<sequence>MEEKYSSNVMSSGRLGPVDAPESRLTRYIVLLCFTKFLKALGIFESYDLLKVVHIVQFIFILKLGSTCFMVLFQKPFSSGKSITKRQWVSIVKHAFVSCIISLLWFFGLTLCGPLRTLLLFEHSDIVVISLLTVLFTGSGGGPSKTRGAAFFIIAVICLLLFDNDDLMAKIAEHPEGHHDSALTHFLYRAFFLLGVADHKGGVLLLVLALCFNVGFHTASRKLSLDIGGAKRLQALSHLVSVIILSPWVIILSATTESKIESWSALIMPFMTVIFSVMIMDFYVESVCSVKMEPSKCARYGSFLIFASALLLGNFWTHPITDQLRAMNKPAHQLHTEHVLSGGVVVSAIFFILSAQILASSSRKGQRGTLVGYSPEGTPLYNFMGDALHNTSPSMPRFLKDSLKQILEEYDSRQIFYFLCLNLAFTFVEIFYGVWTNSLGLLSDGFHMLFDCSALVMGLIAALMTRWKATRIFSYGYGRVEILSGFINGLFLVVIAFFVFIEAVARIYDPPDINTDMLTPVSVGGLIVNLVGICAFSHAHSHGAARGGCPSHDHGHSHHGHGHSHGHNHGHSHSDHGHNHGHTHNHGHSHGSAGVGMNANMRGVFSHVLADTLGSVGVIVSTILIRQFGWLIADPLCSLFIAVLIFGSVLPLLKDACQVILLRIPQETEKGINIALEKISNLDGLISYRDPHFWRHSASLVAGTIHVQVMSDVVEQRIIQQVTSLLKDAGVNNLTVQVEKEAYFQHMSGLSTGFQDVLIMTKQMDTIKYYKDGTYIM</sequence>
<feature type="chain" id="PRO_0000314297" description="Proton-coupled zinc antiporter SLC30A5">
    <location>
        <begin position="1"/>
        <end position="777"/>
    </location>
</feature>
<feature type="topological domain" description="Cytoplasmic" evidence="5">
    <location>
        <begin position="1"/>
        <end position="28"/>
    </location>
</feature>
<feature type="transmembrane region" description="Helical" evidence="3">
    <location>
        <begin position="29"/>
        <end position="49"/>
    </location>
</feature>
<feature type="topological domain" description="Lumenal" evidence="5">
    <location>
        <begin position="50"/>
        <end position="52"/>
    </location>
</feature>
<feature type="transmembrane region" description="Helical" evidence="3">
    <location>
        <begin position="53"/>
        <end position="73"/>
    </location>
</feature>
<feature type="topological domain" description="Cytoplasmic" evidence="5">
    <location>
        <begin position="74"/>
        <end position="94"/>
    </location>
</feature>
<feature type="transmembrane region" description="Helical" evidence="3">
    <location>
        <begin position="95"/>
        <end position="115"/>
    </location>
</feature>
<feature type="topological domain" description="Lumenal" evidence="5">
    <location>
        <begin position="116"/>
        <end position="117"/>
    </location>
</feature>
<feature type="transmembrane region" description="Helical" evidence="3">
    <location>
        <begin position="118"/>
        <end position="138"/>
    </location>
</feature>
<feature type="topological domain" description="Cytoplasmic" evidence="5">
    <location>
        <begin position="139"/>
        <end position="148"/>
    </location>
</feature>
<feature type="transmembrane region" description="Helical" evidence="3">
    <location>
        <begin position="149"/>
        <end position="169"/>
    </location>
</feature>
<feature type="topological domain" description="Lumenal" evidence="5">
    <location>
        <begin position="170"/>
        <end position="189"/>
    </location>
</feature>
<feature type="transmembrane region" description="Helical" evidence="3">
    <location>
        <begin position="190"/>
        <end position="210"/>
    </location>
</feature>
<feature type="topological domain" description="Cytoplasmic" evidence="5">
    <location>
        <begin position="211"/>
        <end position="234"/>
    </location>
</feature>
<feature type="transmembrane region" description="Helical" evidence="3">
    <location>
        <begin position="235"/>
        <end position="255"/>
    </location>
</feature>
<feature type="topological domain" description="Lumenal" evidence="5">
    <location>
        <begin position="256"/>
        <end position="263"/>
    </location>
</feature>
<feature type="transmembrane region" description="Helical" evidence="3">
    <location>
        <begin position="264"/>
        <end position="284"/>
    </location>
</feature>
<feature type="topological domain" description="Cytoplasmic" evidence="5">
    <location>
        <begin position="285"/>
        <end position="299"/>
    </location>
</feature>
<feature type="transmembrane region" description="Helical" evidence="3">
    <location>
        <begin position="300"/>
        <end position="320"/>
    </location>
</feature>
<feature type="topological domain" description="Lumenal" evidence="5">
    <location>
        <begin position="321"/>
        <end position="338"/>
    </location>
</feature>
<feature type="transmembrane region" description="Helical" evidence="3">
    <location>
        <begin position="339"/>
        <end position="359"/>
    </location>
</feature>
<feature type="topological domain" description="Cytoplasmic" evidence="5">
    <location>
        <begin position="360"/>
        <end position="414"/>
    </location>
</feature>
<feature type="transmembrane region" description="Helical" evidence="3">
    <location>
        <begin position="415"/>
        <end position="435"/>
    </location>
</feature>
<feature type="topological domain" description="Lumenal" evidence="5">
    <location>
        <begin position="436"/>
        <end position="444"/>
    </location>
</feature>
<feature type="transmembrane region" description="Helical" evidence="3">
    <location>
        <begin position="445"/>
        <end position="465"/>
    </location>
</feature>
<feature type="topological domain" description="Cytoplasmic" evidence="5">
    <location>
        <begin position="466"/>
        <end position="484"/>
    </location>
</feature>
<feature type="transmembrane region" description="Helical" evidence="3">
    <location>
        <begin position="485"/>
        <end position="505"/>
    </location>
</feature>
<feature type="topological domain" description="Lumenal" evidence="5">
    <location>
        <begin position="506"/>
        <end position="516"/>
    </location>
</feature>
<feature type="transmembrane region" description="Helical" evidence="3">
    <location>
        <begin position="517"/>
        <end position="537"/>
    </location>
</feature>
<feature type="topological domain" description="Cytoplasmic" evidence="5">
    <location>
        <begin position="538"/>
        <end position="604"/>
    </location>
</feature>
<feature type="transmembrane region" description="Helical" evidence="3">
    <location>
        <begin position="605"/>
        <end position="625"/>
    </location>
</feature>
<feature type="topological domain" description="Lumenal" evidence="5">
    <location>
        <begin position="626"/>
        <end position="629"/>
    </location>
</feature>
<feature type="transmembrane region" description="Helical" evidence="3">
    <location>
        <begin position="630"/>
        <end position="650"/>
    </location>
</feature>
<feature type="topological domain" description="Cytoplasmic" evidence="5">
    <location>
        <begin position="651"/>
        <end position="777"/>
    </location>
</feature>
<feature type="region of interest" description="His-rich loop; required for zinc transport" evidence="2">
    <location>
        <begin position="538"/>
        <end position="586"/>
    </location>
</feature>
<feature type="region of interest" description="Disordered" evidence="4">
    <location>
        <begin position="547"/>
        <end position="593"/>
    </location>
</feature>
<feature type="compositionally biased region" description="Basic residues" evidence="4">
    <location>
        <begin position="555"/>
        <end position="571"/>
    </location>
</feature>
<feature type="compositionally biased region" description="Basic residues" evidence="4">
    <location>
        <begin position="579"/>
        <end position="589"/>
    </location>
</feature>
<feature type="binding site" evidence="1">
    <location>
        <position position="447"/>
    </location>
    <ligand>
        <name>Zn(2+)</name>
        <dbReference type="ChEBI" id="CHEBI:29105"/>
        <note>transported zinc</note>
    </ligand>
</feature>
<feature type="binding site" evidence="1">
    <location>
        <position position="451"/>
    </location>
    <ligand>
        <name>Zn(2+)</name>
        <dbReference type="ChEBI" id="CHEBI:29105"/>
        <note>transported zinc</note>
    </ligand>
</feature>
<feature type="binding site" evidence="1">
    <location>
        <position position="607"/>
    </location>
    <ligand>
        <name>Zn(2+)</name>
        <dbReference type="ChEBI" id="CHEBI:29105"/>
        <note>transported zinc</note>
    </ligand>
</feature>
<feature type="binding site" evidence="1">
    <location>
        <position position="611"/>
    </location>
    <ligand>
        <name>Zn(2+)</name>
        <dbReference type="ChEBI" id="CHEBI:29105"/>
        <note>transported zinc</note>
    </ligand>
</feature>
<feature type="sequence conflict" description="In Ref. 2; AAI23968." evidence="5" ref="2">
    <original>A</original>
    <variation>T</variation>
    <location>
        <position position="307"/>
    </location>
</feature>
<feature type="sequence conflict" description="In Ref. 2; AAI23968." evidence="5" ref="2">
    <original>S</original>
    <variation>L</variation>
    <location>
        <position position="606"/>
    </location>
</feature>
<comment type="function">
    <text evidence="2">Together with SLC30A6 forms a functional proton-coupled zinc ion antiporter mediating zinc entry into the lumen of organelles along the secretory pathway. By contributing to zinc ion homeostasis within the early secretory pathway, regulates the activation and folding of enzymes like alkaline phosphatases and enzymes involved in phosphatidylinositol glycan anchor biosynthesis.</text>
</comment>
<comment type="catalytic activity">
    <reaction evidence="2">
        <text>Zn(2+)(in) + 2 H(+)(out) = Zn(2+)(out) + 2 H(+)(in)</text>
        <dbReference type="Rhea" id="RHEA:72627"/>
        <dbReference type="ChEBI" id="CHEBI:15378"/>
        <dbReference type="ChEBI" id="CHEBI:29105"/>
    </reaction>
</comment>
<comment type="subunit">
    <text evidence="2">Heterodimer with SLC30A6/ZNT6; form a functional zinc ion transmembrane transporter.</text>
</comment>
<comment type="subcellular location">
    <subcellularLocation>
        <location evidence="2">Golgi apparatus</location>
        <location evidence="2">Golgi stack membrane</location>
        <topology evidence="3">Multi-pass membrane protein</topology>
    </subcellularLocation>
    <subcellularLocation>
        <location evidence="2">Cytoplasmic vesicle</location>
        <location evidence="2">COPII-coated vesicle membrane</location>
        <topology evidence="3">Multi-pass membrane protein</topology>
    </subcellularLocation>
    <subcellularLocation>
        <location evidence="2">Cytoplasmic vesicle</location>
        <location evidence="2">Secretory vesicle membrane</location>
        <topology evidence="3">Multi-pass membrane protein</topology>
    </subcellularLocation>
    <subcellularLocation>
        <location evidence="2">Golgi apparatus</location>
        <location evidence="2">trans-Golgi network membrane</location>
        <topology evidence="3">Multi-pass membrane protein</topology>
    </subcellularLocation>
    <text evidence="2">Enriched in early compartments of the secretory pathway including COPII-coated vesicles and the Golgi cis cisterna.</text>
</comment>
<comment type="similarity">
    <text evidence="5">Belongs to the cation diffusion facilitator (CDF) transporter (TC 2.A.4) family. SLC30A subfamily.</text>
</comment>